<organism>
    <name type="scientific">Neurospora crassa (strain ATCC 24698 / 74-OR23-1A / CBS 708.71 / DSM 1257 / FGSC 987)</name>
    <dbReference type="NCBI Taxonomy" id="367110"/>
    <lineage>
        <taxon>Eukaryota</taxon>
        <taxon>Fungi</taxon>
        <taxon>Dikarya</taxon>
        <taxon>Ascomycota</taxon>
        <taxon>Pezizomycotina</taxon>
        <taxon>Sordariomycetes</taxon>
        <taxon>Sordariomycetidae</taxon>
        <taxon>Sordariales</taxon>
        <taxon>Sordariaceae</taxon>
        <taxon>Neurospora</taxon>
    </lineage>
</organism>
<reference key="1">
    <citation type="journal article" date="2003" name="Nature">
        <title>The genome sequence of the filamentous fungus Neurospora crassa.</title>
        <authorList>
            <person name="Galagan J.E."/>
            <person name="Calvo S.E."/>
            <person name="Borkovich K.A."/>
            <person name="Selker E.U."/>
            <person name="Read N.D."/>
            <person name="Jaffe D.B."/>
            <person name="FitzHugh W."/>
            <person name="Ma L.-J."/>
            <person name="Smirnov S."/>
            <person name="Purcell S."/>
            <person name="Rehman B."/>
            <person name="Elkins T."/>
            <person name="Engels R."/>
            <person name="Wang S."/>
            <person name="Nielsen C.B."/>
            <person name="Butler J."/>
            <person name="Endrizzi M."/>
            <person name="Qui D."/>
            <person name="Ianakiev P."/>
            <person name="Bell-Pedersen D."/>
            <person name="Nelson M.A."/>
            <person name="Werner-Washburne M."/>
            <person name="Selitrennikoff C.P."/>
            <person name="Kinsey J.A."/>
            <person name="Braun E.L."/>
            <person name="Zelter A."/>
            <person name="Schulte U."/>
            <person name="Kothe G.O."/>
            <person name="Jedd G."/>
            <person name="Mewes H.-W."/>
            <person name="Staben C."/>
            <person name="Marcotte E."/>
            <person name="Greenberg D."/>
            <person name="Roy A."/>
            <person name="Foley K."/>
            <person name="Naylor J."/>
            <person name="Stange-Thomann N."/>
            <person name="Barrett R."/>
            <person name="Gnerre S."/>
            <person name="Kamal M."/>
            <person name="Kamvysselis M."/>
            <person name="Mauceli E.W."/>
            <person name="Bielke C."/>
            <person name="Rudd S."/>
            <person name="Frishman D."/>
            <person name="Krystofova S."/>
            <person name="Rasmussen C."/>
            <person name="Metzenberg R.L."/>
            <person name="Perkins D.D."/>
            <person name="Kroken S."/>
            <person name="Cogoni C."/>
            <person name="Macino G."/>
            <person name="Catcheside D.E.A."/>
            <person name="Li W."/>
            <person name="Pratt R.J."/>
            <person name="Osmani S.A."/>
            <person name="DeSouza C.P.C."/>
            <person name="Glass N.L."/>
            <person name="Orbach M.J."/>
            <person name="Berglund J.A."/>
            <person name="Voelker R."/>
            <person name="Yarden O."/>
            <person name="Plamann M."/>
            <person name="Seiler S."/>
            <person name="Dunlap J.C."/>
            <person name="Radford A."/>
            <person name="Aramayo R."/>
            <person name="Natvig D.O."/>
            <person name="Alex L.A."/>
            <person name="Mannhaupt G."/>
            <person name="Ebbole D.J."/>
            <person name="Freitag M."/>
            <person name="Paulsen I."/>
            <person name="Sachs M.S."/>
            <person name="Lander E.S."/>
            <person name="Nusbaum C."/>
            <person name="Birren B.W."/>
        </authorList>
    </citation>
    <scope>NUCLEOTIDE SEQUENCE [LARGE SCALE GENOMIC DNA]</scope>
    <source>
        <strain>ATCC 24698 / 74-OR23-1A / CBS 708.71 / DSM 1257 / FGSC 987</strain>
    </source>
</reference>
<keyword id="KW-0378">Hydrolase</keyword>
<keyword id="KW-0472">Membrane</keyword>
<keyword id="KW-0479">Metal-binding</keyword>
<keyword id="KW-0482">Metalloprotease</keyword>
<keyword id="KW-0496">Mitochondrion</keyword>
<keyword id="KW-0999">Mitochondrion inner membrane</keyword>
<keyword id="KW-0645">Protease</keyword>
<keyword id="KW-1185">Reference proteome</keyword>
<comment type="function">
    <text evidence="1">Has a dual role in the assembly of mitochondrial ATPase. Acts as a protease that removes N-terminal residues of mitochondrial ATPase CF(0) subunit 6 at the intermembrane space side. Also involved in the correct assembly of the membrane-embedded ATPase CF(0) particle, probably mediating association of subunit 6 with the subunit 9 ring (By similarity).</text>
</comment>
<comment type="subcellular location">
    <subcellularLocation>
        <location>Mitochondrion inner membrane</location>
        <topology>Peripheral membrane protein</topology>
        <orientation>Intermembrane side</orientation>
    </subcellularLocation>
    <text evidence="1">Associates loosely with the inner membrane.</text>
</comment>
<comment type="similarity">
    <text evidence="4">Belongs to the peptidase M76 family.</text>
</comment>
<feature type="chain" id="PRO_0000330068" description="Mitochondrial inner membrane protease atp23">
    <location>
        <begin position="1"/>
        <end position="293"/>
    </location>
</feature>
<feature type="region of interest" description="Disordered" evidence="3">
    <location>
        <begin position="1"/>
        <end position="51"/>
    </location>
</feature>
<feature type="compositionally biased region" description="Low complexity" evidence="3">
    <location>
        <begin position="8"/>
        <end position="22"/>
    </location>
</feature>
<feature type="active site" evidence="2">
    <location>
        <position position="191"/>
    </location>
</feature>
<feature type="binding site" evidence="1">
    <location>
        <position position="190"/>
    </location>
    <ligand>
        <name>a divalent metal cation</name>
        <dbReference type="ChEBI" id="CHEBI:60240"/>
        <note>catalytic</note>
    </ligand>
</feature>
<feature type="binding site" evidence="1">
    <location>
        <position position="194"/>
    </location>
    <ligand>
        <name>a divalent metal cation</name>
        <dbReference type="ChEBI" id="CHEBI:60240"/>
        <note>catalytic</note>
    </ligand>
</feature>
<protein>
    <recommendedName>
        <fullName>Mitochondrial inner membrane protease atp23</fullName>
        <ecNumber>3.4.24.-</ecNumber>
    </recommendedName>
</protein>
<sequence length="293" mass="33405">MSPAPTTSAGPASSGIPPSSLPTSTVTEDDTKPSSSSSKANDLLPRYLTNDPSRTGYDPSIQWWMNYFKILTGQITPEGVEHYREDRYKANEARDCARCEADRDWLFQNSPVIRFLREKVANLNGVLDETNVVCRRCPSRIVVIPGNKEKGEEDRIEVARQGGGFSPDHGILLCANEMRNRGHLEDTLAHEMVHAWDHLRWKVDWFGEKSLRHAACTEIRASMLSGECRWTRESIVRGNWTLTQQFQNCVRMRAIQSVMARPTCKDDVHATKVVNEVWDSCFSDKRPFEEIYR</sequence>
<proteinExistence type="inferred from homology"/>
<dbReference type="EC" id="3.4.24.-"/>
<dbReference type="EMBL" id="CM002238">
    <property type="protein sequence ID" value="EAA27995.3"/>
    <property type="molecule type" value="Genomic_DNA"/>
</dbReference>
<dbReference type="RefSeq" id="XP_957231.3">
    <property type="nucleotide sequence ID" value="XM_952138.3"/>
</dbReference>
<dbReference type="FunCoup" id="Q7RYM1">
    <property type="interactions" value="487"/>
</dbReference>
<dbReference type="STRING" id="367110.Q7RYM1"/>
<dbReference type="MEROPS" id="M76.002"/>
<dbReference type="PaxDb" id="5141-EFNCRP00000000370"/>
<dbReference type="EnsemblFungi" id="EAA27995">
    <property type="protein sequence ID" value="EAA27995"/>
    <property type="gene ID" value="NCU00107"/>
</dbReference>
<dbReference type="GeneID" id="3873394"/>
<dbReference type="KEGG" id="ncr:NCU00107"/>
<dbReference type="VEuPathDB" id="FungiDB:NCU00107"/>
<dbReference type="HOGENOM" id="CLU_079125_0_0_1"/>
<dbReference type="InParanoid" id="Q7RYM1"/>
<dbReference type="OrthoDB" id="285308at2759"/>
<dbReference type="Proteomes" id="UP000001805">
    <property type="component" value="Chromosome 3, Linkage Group III"/>
</dbReference>
<dbReference type="GO" id="GO:0005743">
    <property type="term" value="C:mitochondrial inner membrane"/>
    <property type="evidence" value="ECO:0007669"/>
    <property type="project" value="UniProtKB-SubCell"/>
</dbReference>
<dbReference type="GO" id="GO:0046872">
    <property type="term" value="F:metal ion binding"/>
    <property type="evidence" value="ECO:0007669"/>
    <property type="project" value="UniProtKB-KW"/>
</dbReference>
<dbReference type="GO" id="GO:0004222">
    <property type="term" value="F:metalloendopeptidase activity"/>
    <property type="evidence" value="ECO:0007669"/>
    <property type="project" value="InterPro"/>
</dbReference>
<dbReference type="GO" id="GO:0034982">
    <property type="term" value="P:mitochondrial protein processing"/>
    <property type="evidence" value="ECO:0000318"/>
    <property type="project" value="GO_Central"/>
</dbReference>
<dbReference type="GO" id="GO:0033615">
    <property type="term" value="P:mitochondrial proton-transporting ATP synthase complex assembly"/>
    <property type="evidence" value="ECO:0000318"/>
    <property type="project" value="GO_Central"/>
</dbReference>
<dbReference type="InterPro" id="IPR019165">
    <property type="entry name" value="Peptidase_M76_ATP23"/>
</dbReference>
<dbReference type="PANTHER" id="PTHR21711">
    <property type="entry name" value="MITOCHONDRIAL INNER MEMBRANE PROTEASE"/>
    <property type="match status" value="1"/>
</dbReference>
<dbReference type="PANTHER" id="PTHR21711:SF0">
    <property type="entry name" value="MITOCHONDRIAL INNER MEMBRANE PROTEASE ATP23 HOMOLOG"/>
    <property type="match status" value="1"/>
</dbReference>
<dbReference type="Pfam" id="PF09768">
    <property type="entry name" value="Peptidase_M76"/>
    <property type="match status" value="1"/>
</dbReference>
<dbReference type="PROSITE" id="PS00142">
    <property type="entry name" value="ZINC_PROTEASE"/>
    <property type="match status" value="1"/>
</dbReference>
<accession>Q7RYM1</accession>
<name>ATP23_NEUCR</name>
<gene>
    <name type="primary">atp23</name>
    <name type="ORF">NCU00107</name>
</gene>
<evidence type="ECO:0000250" key="1"/>
<evidence type="ECO:0000255" key="2">
    <source>
        <dbReference type="PROSITE-ProRule" id="PRU10095"/>
    </source>
</evidence>
<evidence type="ECO:0000256" key="3">
    <source>
        <dbReference type="SAM" id="MobiDB-lite"/>
    </source>
</evidence>
<evidence type="ECO:0000305" key="4"/>